<protein>
    <recommendedName>
        <fullName evidence="1">Glutamate-1-semialdehyde 2,1-aminomutase</fullName>
        <shortName evidence="1">GSA</shortName>
        <ecNumber evidence="1">5.4.3.8</ecNumber>
    </recommendedName>
    <alternativeName>
        <fullName evidence="1">Glutamate-1-semialdehyde aminotransferase</fullName>
        <shortName evidence="1">GSA-AT</shortName>
    </alternativeName>
</protein>
<sequence length="426" mass="47328">MRLDKSKEVFDNTKRYIPGGVNSPVRAFKNLSITPPVISKGKGCRIFDIDGNEYIDFVLSWGAMILGHCDPDVVNRMKEVVEDQIAFGAPTEIEYKMAKLVCETAQIDMVRFVNSGTEATMTAVRLAKGYTGKKKIVKFAGCYHGHHDIFLKEAGSAVAELRLKRIDEDIVQNTIVVEYNNLDSVEKAFKENKDEIAAVIIEPVAGNMGVVPAKKEFLQVLREICNLHGSLLIFDEVITGFRLSLKGARALYNVEPDLVTFGKIIGGGLPCGAVGGKKEIMECLAPQGNVFQAGTMSGNPIVMSAGYATIKKLKENPHFYSNLEMLAGKLEKELTQVFSNSNLTFCINRVGSMLTIFFGVEKVENFEMAKMSDLDLFRSFAEYMIKNHIYVPSSQFEAMFLSVAHSENDVEKFVEIAEEFCSSKRK</sequence>
<accession>B9MRJ7</accession>
<keyword id="KW-0963">Cytoplasm</keyword>
<keyword id="KW-0413">Isomerase</keyword>
<keyword id="KW-0627">Porphyrin biosynthesis</keyword>
<keyword id="KW-0663">Pyridoxal phosphate</keyword>
<feature type="chain" id="PRO_1000201011" description="Glutamate-1-semialdehyde 2,1-aminomutase">
    <location>
        <begin position="1"/>
        <end position="426"/>
    </location>
</feature>
<feature type="modified residue" description="N6-(pyridoxal phosphate)lysine" evidence="1">
    <location>
        <position position="263"/>
    </location>
</feature>
<gene>
    <name evidence="1" type="primary">hemL</name>
    <name type="ordered locus">Athe_1201</name>
</gene>
<dbReference type="EC" id="5.4.3.8" evidence="1"/>
<dbReference type="EMBL" id="CP001393">
    <property type="protein sequence ID" value="ACM60301.1"/>
    <property type="molecule type" value="Genomic_DNA"/>
</dbReference>
<dbReference type="RefSeq" id="WP_015907695.1">
    <property type="nucleotide sequence ID" value="NC_012034.1"/>
</dbReference>
<dbReference type="SMR" id="B9MRJ7"/>
<dbReference type="STRING" id="521460.Athe_1201"/>
<dbReference type="GeneID" id="31772550"/>
<dbReference type="KEGG" id="ate:Athe_1201"/>
<dbReference type="eggNOG" id="COG0001">
    <property type="taxonomic scope" value="Bacteria"/>
</dbReference>
<dbReference type="HOGENOM" id="CLU_016922_1_5_9"/>
<dbReference type="UniPathway" id="UPA00251">
    <property type="reaction ID" value="UER00317"/>
</dbReference>
<dbReference type="Proteomes" id="UP000007723">
    <property type="component" value="Chromosome"/>
</dbReference>
<dbReference type="GO" id="GO:0005737">
    <property type="term" value="C:cytoplasm"/>
    <property type="evidence" value="ECO:0007669"/>
    <property type="project" value="UniProtKB-SubCell"/>
</dbReference>
<dbReference type="GO" id="GO:0042286">
    <property type="term" value="F:glutamate-1-semialdehyde 2,1-aminomutase activity"/>
    <property type="evidence" value="ECO:0007669"/>
    <property type="project" value="UniProtKB-UniRule"/>
</dbReference>
<dbReference type="GO" id="GO:0030170">
    <property type="term" value="F:pyridoxal phosphate binding"/>
    <property type="evidence" value="ECO:0007669"/>
    <property type="project" value="InterPro"/>
</dbReference>
<dbReference type="GO" id="GO:0008483">
    <property type="term" value="F:transaminase activity"/>
    <property type="evidence" value="ECO:0007669"/>
    <property type="project" value="InterPro"/>
</dbReference>
<dbReference type="GO" id="GO:0006782">
    <property type="term" value="P:protoporphyrinogen IX biosynthetic process"/>
    <property type="evidence" value="ECO:0007669"/>
    <property type="project" value="UniProtKB-UniRule"/>
</dbReference>
<dbReference type="CDD" id="cd00610">
    <property type="entry name" value="OAT_like"/>
    <property type="match status" value="1"/>
</dbReference>
<dbReference type="FunFam" id="3.40.640.10:FF:000021">
    <property type="entry name" value="Glutamate-1-semialdehyde 2,1-aminomutase"/>
    <property type="match status" value="1"/>
</dbReference>
<dbReference type="Gene3D" id="3.90.1150.10">
    <property type="entry name" value="Aspartate Aminotransferase, domain 1"/>
    <property type="match status" value="1"/>
</dbReference>
<dbReference type="Gene3D" id="3.40.640.10">
    <property type="entry name" value="Type I PLP-dependent aspartate aminotransferase-like (Major domain)"/>
    <property type="match status" value="1"/>
</dbReference>
<dbReference type="HAMAP" id="MF_00375">
    <property type="entry name" value="HemL_aminotrans_3"/>
    <property type="match status" value="1"/>
</dbReference>
<dbReference type="InterPro" id="IPR004639">
    <property type="entry name" value="4pyrrol_synth_GluAld_NH2Trfase"/>
</dbReference>
<dbReference type="InterPro" id="IPR005814">
    <property type="entry name" value="Aminotrans_3"/>
</dbReference>
<dbReference type="InterPro" id="IPR049704">
    <property type="entry name" value="Aminotrans_3_PPA_site"/>
</dbReference>
<dbReference type="InterPro" id="IPR015424">
    <property type="entry name" value="PyrdxlP-dep_Trfase"/>
</dbReference>
<dbReference type="InterPro" id="IPR015421">
    <property type="entry name" value="PyrdxlP-dep_Trfase_major"/>
</dbReference>
<dbReference type="InterPro" id="IPR015422">
    <property type="entry name" value="PyrdxlP-dep_Trfase_small"/>
</dbReference>
<dbReference type="NCBIfam" id="TIGR00713">
    <property type="entry name" value="hemL"/>
    <property type="match status" value="1"/>
</dbReference>
<dbReference type="NCBIfam" id="NF000818">
    <property type="entry name" value="PRK00062.1"/>
    <property type="match status" value="1"/>
</dbReference>
<dbReference type="PANTHER" id="PTHR43713">
    <property type="entry name" value="GLUTAMATE-1-SEMIALDEHYDE 2,1-AMINOMUTASE"/>
    <property type="match status" value="1"/>
</dbReference>
<dbReference type="PANTHER" id="PTHR43713:SF3">
    <property type="entry name" value="GLUTAMATE-1-SEMIALDEHYDE 2,1-AMINOMUTASE 1, CHLOROPLASTIC-RELATED"/>
    <property type="match status" value="1"/>
</dbReference>
<dbReference type="Pfam" id="PF00202">
    <property type="entry name" value="Aminotran_3"/>
    <property type="match status" value="1"/>
</dbReference>
<dbReference type="SUPFAM" id="SSF53383">
    <property type="entry name" value="PLP-dependent transferases"/>
    <property type="match status" value="1"/>
</dbReference>
<dbReference type="PROSITE" id="PS00600">
    <property type="entry name" value="AA_TRANSFER_CLASS_3"/>
    <property type="match status" value="1"/>
</dbReference>
<comment type="catalytic activity">
    <reaction evidence="1">
        <text>(S)-4-amino-5-oxopentanoate = 5-aminolevulinate</text>
        <dbReference type="Rhea" id="RHEA:14265"/>
        <dbReference type="ChEBI" id="CHEBI:57501"/>
        <dbReference type="ChEBI" id="CHEBI:356416"/>
        <dbReference type="EC" id="5.4.3.8"/>
    </reaction>
</comment>
<comment type="cofactor">
    <cofactor evidence="1">
        <name>pyridoxal 5'-phosphate</name>
        <dbReference type="ChEBI" id="CHEBI:597326"/>
    </cofactor>
</comment>
<comment type="pathway">
    <text evidence="1">Porphyrin-containing compound metabolism; protoporphyrin-IX biosynthesis; 5-aminolevulinate from L-glutamyl-tRNA(Glu): step 2/2.</text>
</comment>
<comment type="subunit">
    <text evidence="1">Homodimer.</text>
</comment>
<comment type="subcellular location">
    <subcellularLocation>
        <location evidence="1">Cytoplasm</location>
    </subcellularLocation>
</comment>
<comment type="similarity">
    <text evidence="1">Belongs to the class-III pyridoxal-phosphate-dependent aminotransferase family. HemL subfamily.</text>
</comment>
<evidence type="ECO:0000255" key="1">
    <source>
        <dbReference type="HAMAP-Rule" id="MF_00375"/>
    </source>
</evidence>
<organism>
    <name type="scientific">Caldicellulosiruptor bescii (strain ATCC BAA-1888 / DSM 6725 / KCTC 15123 / Z-1320)</name>
    <name type="common">Anaerocellum thermophilum</name>
    <dbReference type="NCBI Taxonomy" id="521460"/>
    <lineage>
        <taxon>Bacteria</taxon>
        <taxon>Bacillati</taxon>
        <taxon>Bacillota</taxon>
        <taxon>Bacillota incertae sedis</taxon>
        <taxon>Caldicellulosiruptorales</taxon>
        <taxon>Caldicellulosiruptoraceae</taxon>
        <taxon>Caldicellulosiruptor</taxon>
    </lineage>
</organism>
<reference key="1">
    <citation type="submission" date="2009-01" db="EMBL/GenBank/DDBJ databases">
        <title>Complete sequence of chromosome of Caldicellulosiruptor becscii DSM 6725.</title>
        <authorList>
            <person name="Lucas S."/>
            <person name="Copeland A."/>
            <person name="Lapidus A."/>
            <person name="Glavina del Rio T."/>
            <person name="Tice H."/>
            <person name="Bruce D."/>
            <person name="Goodwin L."/>
            <person name="Pitluck S."/>
            <person name="Sims D."/>
            <person name="Meincke L."/>
            <person name="Brettin T."/>
            <person name="Detter J.C."/>
            <person name="Han C."/>
            <person name="Larimer F."/>
            <person name="Land M."/>
            <person name="Hauser L."/>
            <person name="Kyrpides N."/>
            <person name="Ovchinnikova G."/>
            <person name="Kataeva I."/>
            <person name="Adams M.W.W."/>
        </authorList>
    </citation>
    <scope>NUCLEOTIDE SEQUENCE [LARGE SCALE GENOMIC DNA]</scope>
    <source>
        <strain>ATCC BAA-1888 / DSM 6725 / KCTC 15123 / Z-1320</strain>
    </source>
</reference>
<proteinExistence type="inferred from homology"/>
<name>GSA_CALBD</name>